<reference key="1">
    <citation type="journal article" date="2000" name="Nucleic Acids Res.">
        <title>Complete genome sequence of the alkaliphilic bacterium Bacillus halodurans and genomic sequence comparison with Bacillus subtilis.</title>
        <authorList>
            <person name="Takami H."/>
            <person name="Nakasone K."/>
            <person name="Takaki Y."/>
            <person name="Maeno G."/>
            <person name="Sasaki R."/>
            <person name="Masui N."/>
            <person name="Fuji F."/>
            <person name="Hirama C."/>
            <person name="Nakamura Y."/>
            <person name="Ogasawara N."/>
            <person name="Kuhara S."/>
            <person name="Horikoshi K."/>
        </authorList>
    </citation>
    <scope>NUCLEOTIDE SEQUENCE [LARGE SCALE GENOMIC DNA]</scope>
    <source>
        <strain>ATCC BAA-125 / DSM 18197 / FERM 7344 / JCM 9153 / C-125</strain>
    </source>
</reference>
<proteinExistence type="inferred from homology"/>
<sequence length="338" mass="37170">MEHKLFSSYVVKGVTLKNRIVMSPMCMYSSDQKDGKIRPFHISHYESRAAGQVGLIIVEATAVTPQGRISPYDLGIWSDDHISGLTETVERIHAHGAKAAIQLAHAGRKAELDGPIIAPSAISYDKMKTPDAMTEEQISETIEAFKLGALRAKKAGFDIIEIHGAHGYLINEFLSPLTNKRTDAYGGSLENRYRLLREIISEIQTVWDGPLFVRISAAEYAEGGNELSDFITLAKWMKKQGIDLIDCSSGAVVPAPIPVYPGYQVPLAEAIRHEANIATGAVGLITSGIQAEEILQNERADLIFVARELLRNPYWPREAALELGTTISGPSQYDRAWL</sequence>
<organism>
    <name type="scientific">Halalkalibacterium halodurans (strain ATCC BAA-125 / DSM 18197 / FERM 7344 / JCM 9153 / C-125)</name>
    <name type="common">Bacillus halodurans</name>
    <dbReference type="NCBI Taxonomy" id="272558"/>
    <lineage>
        <taxon>Bacteria</taxon>
        <taxon>Bacillati</taxon>
        <taxon>Bacillota</taxon>
        <taxon>Bacilli</taxon>
        <taxon>Bacillales</taxon>
        <taxon>Bacillaceae</taxon>
        <taxon>Halalkalibacterium (ex Joshi et al. 2022)</taxon>
    </lineage>
</organism>
<name>NAMA_HALH5</name>
<comment type="function">
    <text evidence="1">Catalyzes the reduction of the double bond of an array of alpha,beta-unsaturated aldehydes and ketones. It also reduces the nitro group of nitroester and nitroaromatic compounds. It could have a role in detoxification processes.</text>
</comment>
<comment type="catalytic activity">
    <reaction evidence="1">
        <text>A + NADPH + H(+) = AH2 + NADP(+)</text>
        <dbReference type="Rhea" id="RHEA:13149"/>
        <dbReference type="ChEBI" id="CHEBI:13193"/>
        <dbReference type="ChEBI" id="CHEBI:15378"/>
        <dbReference type="ChEBI" id="CHEBI:17499"/>
        <dbReference type="ChEBI" id="CHEBI:57783"/>
        <dbReference type="ChEBI" id="CHEBI:58349"/>
        <dbReference type="EC" id="1.6.99.1"/>
    </reaction>
</comment>
<comment type="cofactor">
    <cofactor evidence="1">
        <name>FMN</name>
        <dbReference type="ChEBI" id="CHEBI:58210"/>
    </cofactor>
</comment>
<comment type="subunit">
    <text evidence="1">Homotetramer.</text>
</comment>
<comment type="similarity">
    <text evidence="1">Belongs to the NADH:flavin oxidoreductase/NADH oxidase family. NamA subfamily.</text>
</comment>
<dbReference type="EC" id="1.6.99.1" evidence="1"/>
<dbReference type="EMBL" id="BA000004">
    <property type="protein sequence ID" value="BAB05200.1"/>
    <property type="molecule type" value="Genomic_DNA"/>
</dbReference>
<dbReference type="PIR" id="A83835">
    <property type="entry name" value="A83835"/>
</dbReference>
<dbReference type="RefSeq" id="WP_010897646.1">
    <property type="nucleotide sequence ID" value="NC_002570.2"/>
</dbReference>
<dbReference type="SMR" id="Q9KCT8"/>
<dbReference type="STRING" id="272558.gene:10727379"/>
<dbReference type="KEGG" id="bha:BH1481"/>
<dbReference type="eggNOG" id="COG1902">
    <property type="taxonomic scope" value="Bacteria"/>
</dbReference>
<dbReference type="HOGENOM" id="CLU_012153_2_1_9"/>
<dbReference type="OrthoDB" id="9772736at2"/>
<dbReference type="Proteomes" id="UP000001258">
    <property type="component" value="Chromosome"/>
</dbReference>
<dbReference type="GO" id="GO:0010181">
    <property type="term" value="F:FMN binding"/>
    <property type="evidence" value="ECO:0007669"/>
    <property type="project" value="UniProtKB-UniRule"/>
</dbReference>
<dbReference type="GO" id="GO:0050661">
    <property type="term" value="F:NADP binding"/>
    <property type="evidence" value="ECO:0007669"/>
    <property type="project" value="UniProtKB-UniRule"/>
</dbReference>
<dbReference type="GO" id="GO:0003959">
    <property type="term" value="F:NADPH dehydrogenase activity"/>
    <property type="evidence" value="ECO:0007669"/>
    <property type="project" value="UniProtKB-UniRule"/>
</dbReference>
<dbReference type="GO" id="GO:0009636">
    <property type="term" value="P:response to toxic substance"/>
    <property type="evidence" value="ECO:0007669"/>
    <property type="project" value="UniProtKB-KW"/>
</dbReference>
<dbReference type="CDD" id="cd02932">
    <property type="entry name" value="OYE_YqiM_FMN"/>
    <property type="match status" value="1"/>
</dbReference>
<dbReference type="Gene3D" id="3.20.20.70">
    <property type="entry name" value="Aldolase class I"/>
    <property type="match status" value="1"/>
</dbReference>
<dbReference type="HAMAP" id="MF_01614">
    <property type="entry name" value="NamA"/>
    <property type="match status" value="1"/>
</dbReference>
<dbReference type="InterPro" id="IPR013785">
    <property type="entry name" value="Aldolase_TIM"/>
</dbReference>
<dbReference type="InterPro" id="IPR023663">
    <property type="entry name" value="NADPH_DH_bac"/>
</dbReference>
<dbReference type="InterPro" id="IPR001155">
    <property type="entry name" value="OxRdtase_FMN_N"/>
</dbReference>
<dbReference type="InterPro" id="IPR044152">
    <property type="entry name" value="YqjM-like"/>
</dbReference>
<dbReference type="NCBIfam" id="NF010047">
    <property type="entry name" value="PRK13523.1"/>
    <property type="match status" value="1"/>
</dbReference>
<dbReference type="PANTHER" id="PTHR43303">
    <property type="entry name" value="NADPH DEHYDROGENASE C23G7.10C-RELATED"/>
    <property type="match status" value="1"/>
</dbReference>
<dbReference type="PANTHER" id="PTHR43303:SF4">
    <property type="entry name" value="NADPH DEHYDROGENASE C23G7.10C-RELATED"/>
    <property type="match status" value="1"/>
</dbReference>
<dbReference type="Pfam" id="PF00724">
    <property type="entry name" value="Oxidored_FMN"/>
    <property type="match status" value="1"/>
</dbReference>
<dbReference type="SUPFAM" id="SSF51395">
    <property type="entry name" value="FMN-linked oxidoreductases"/>
    <property type="match status" value="1"/>
</dbReference>
<accession>Q9KCT8</accession>
<feature type="chain" id="PRO_0000216116" description="NADPH dehydrogenase">
    <location>
        <begin position="1"/>
        <end position="338"/>
    </location>
</feature>
<feature type="binding site" evidence="1">
    <location>
        <begin position="23"/>
        <end position="26"/>
    </location>
    <ligand>
        <name>FMN</name>
        <dbReference type="ChEBI" id="CHEBI:58210"/>
    </ligand>
</feature>
<feature type="binding site" evidence="1">
    <location>
        <position position="28"/>
    </location>
    <ligand>
        <name>substrate</name>
    </ligand>
</feature>
<feature type="binding site" evidence="1">
    <location>
        <position position="60"/>
    </location>
    <ligand>
        <name>FMN</name>
        <dbReference type="ChEBI" id="CHEBI:58210"/>
    </ligand>
</feature>
<feature type="binding site" evidence="1">
    <location>
        <position position="102"/>
    </location>
    <ligand>
        <name>FMN</name>
        <dbReference type="ChEBI" id="CHEBI:58210"/>
    </ligand>
</feature>
<feature type="binding site" evidence="1">
    <location>
        <begin position="163"/>
        <end position="166"/>
    </location>
    <ligand>
        <name>substrate</name>
    </ligand>
</feature>
<feature type="binding site" evidence="1">
    <location>
        <position position="214"/>
    </location>
    <ligand>
        <name>FMN</name>
        <dbReference type="ChEBI" id="CHEBI:58210"/>
    </ligand>
</feature>
<feature type="binding site" evidence="1">
    <location>
        <begin position="306"/>
        <end position="307"/>
    </location>
    <ligand>
        <name>FMN</name>
        <dbReference type="ChEBI" id="CHEBI:58210"/>
    </ligand>
</feature>
<keyword id="KW-0216">Detoxification</keyword>
<keyword id="KW-0285">Flavoprotein</keyword>
<keyword id="KW-0288">FMN</keyword>
<keyword id="KW-0521">NADP</keyword>
<keyword id="KW-0560">Oxidoreductase</keyword>
<keyword id="KW-1185">Reference proteome</keyword>
<evidence type="ECO:0000255" key="1">
    <source>
        <dbReference type="HAMAP-Rule" id="MF_01614"/>
    </source>
</evidence>
<protein>
    <recommendedName>
        <fullName evidence="1">NADPH dehydrogenase</fullName>
        <ecNumber evidence="1">1.6.99.1</ecNumber>
    </recommendedName>
</protein>
<gene>
    <name evidence="1" type="primary">namA</name>
    <name type="ordered locus">BH1481</name>
</gene>